<proteinExistence type="inferred from homology"/>
<feature type="chain" id="PRO_0000238861" description="Cytochrome c-type biogenesis protein CcmE">
    <location>
        <begin position="1"/>
        <end position="159"/>
    </location>
</feature>
<feature type="topological domain" description="Cytoplasmic" evidence="1">
    <location>
        <begin position="1"/>
        <end position="8"/>
    </location>
</feature>
<feature type="transmembrane region" description="Helical; Signal-anchor for type II membrane protein" evidence="1">
    <location>
        <begin position="9"/>
        <end position="29"/>
    </location>
</feature>
<feature type="topological domain" description="Periplasmic" evidence="1">
    <location>
        <begin position="30"/>
        <end position="159"/>
    </location>
</feature>
<feature type="region of interest" description="Disordered" evidence="2">
    <location>
        <begin position="129"/>
        <end position="159"/>
    </location>
</feature>
<feature type="binding site" description="covalent" evidence="1">
    <location>
        <position position="130"/>
    </location>
    <ligand>
        <name>heme</name>
        <dbReference type="ChEBI" id="CHEBI:30413"/>
    </ligand>
</feature>
<feature type="binding site" description="axial binding residue" evidence="1">
    <location>
        <position position="134"/>
    </location>
    <ligand>
        <name>heme</name>
        <dbReference type="ChEBI" id="CHEBI:30413"/>
    </ligand>
    <ligandPart>
        <name>Fe</name>
        <dbReference type="ChEBI" id="CHEBI:18248"/>
    </ligandPart>
</feature>
<reference key="1">
    <citation type="journal article" date="2004" name="Nat. Genet.">
        <title>Comparison of genome degradation in Paratyphi A and Typhi, human-restricted serovars of Salmonella enterica that cause typhoid.</title>
        <authorList>
            <person name="McClelland M."/>
            <person name="Sanderson K.E."/>
            <person name="Clifton S.W."/>
            <person name="Latreille P."/>
            <person name="Porwollik S."/>
            <person name="Sabo A."/>
            <person name="Meyer R."/>
            <person name="Bieri T."/>
            <person name="Ozersky P."/>
            <person name="McLellan M."/>
            <person name="Harkins C.R."/>
            <person name="Wang C."/>
            <person name="Nguyen C."/>
            <person name="Berghoff A."/>
            <person name="Elliott G."/>
            <person name="Kohlberg S."/>
            <person name="Strong C."/>
            <person name="Du F."/>
            <person name="Carter J."/>
            <person name="Kremizki C."/>
            <person name="Layman D."/>
            <person name="Leonard S."/>
            <person name="Sun H."/>
            <person name="Fulton L."/>
            <person name="Nash W."/>
            <person name="Miner T."/>
            <person name="Minx P."/>
            <person name="Delehaunty K."/>
            <person name="Fronick C."/>
            <person name="Magrini V."/>
            <person name="Nhan M."/>
            <person name="Warren W."/>
            <person name="Florea L."/>
            <person name="Spieth J."/>
            <person name="Wilson R.K."/>
        </authorList>
    </citation>
    <scope>NUCLEOTIDE SEQUENCE [LARGE SCALE GENOMIC DNA]</scope>
    <source>
        <strain>ATCC 9150 / SARB42</strain>
    </source>
</reference>
<gene>
    <name evidence="1" type="primary">ccmE1</name>
    <name evidence="1" type="synonym">cycJ1</name>
    <name type="ordered locus">SPA0614</name>
</gene>
<gene>
    <name evidence="1" type="primary">ccmE2</name>
    <name evidence="1" type="synonym">cycJ2</name>
    <name type="ordered locus">SPA3665</name>
</gene>
<comment type="function">
    <text evidence="1">Heme chaperone required for the biogenesis of c-type cytochromes. Transiently binds heme delivered by CcmC and transfers the heme to apo-cytochromes in a process facilitated by CcmF and CcmH.</text>
</comment>
<comment type="subcellular location">
    <subcellularLocation>
        <location evidence="1">Cell inner membrane</location>
        <topology evidence="1">Single-pass type II membrane protein</topology>
        <orientation evidence="1">Periplasmic side</orientation>
    </subcellularLocation>
</comment>
<comment type="similarity">
    <text evidence="1">Belongs to the CcmE/CycJ family.</text>
</comment>
<accession>Q5PMV3</accession>
<keyword id="KW-0997">Cell inner membrane</keyword>
<keyword id="KW-1003">Cell membrane</keyword>
<keyword id="KW-0201">Cytochrome c-type biogenesis</keyword>
<keyword id="KW-0349">Heme</keyword>
<keyword id="KW-0408">Iron</keyword>
<keyword id="KW-0472">Membrane</keyword>
<keyword id="KW-0479">Metal-binding</keyword>
<keyword id="KW-0735">Signal-anchor</keyword>
<keyword id="KW-0812">Transmembrane</keyword>
<keyword id="KW-1133">Transmembrane helix</keyword>
<name>CCME_SALPA</name>
<evidence type="ECO:0000255" key="1">
    <source>
        <dbReference type="HAMAP-Rule" id="MF_01959"/>
    </source>
</evidence>
<evidence type="ECO:0000256" key="2">
    <source>
        <dbReference type="SAM" id="MobiDB-lite"/>
    </source>
</evidence>
<organism>
    <name type="scientific">Salmonella paratyphi A (strain ATCC 9150 / SARB42)</name>
    <dbReference type="NCBI Taxonomy" id="295319"/>
    <lineage>
        <taxon>Bacteria</taxon>
        <taxon>Pseudomonadati</taxon>
        <taxon>Pseudomonadota</taxon>
        <taxon>Gammaproteobacteria</taxon>
        <taxon>Enterobacterales</taxon>
        <taxon>Enterobacteriaceae</taxon>
        <taxon>Salmonella</taxon>
    </lineage>
</organism>
<sequence length="159" mass="17730">MNLRRKNRLWVVCAVLAGLALTTALVLYALRANIDLFYTPGEILYGKRETQQLPAVGQRLRVGGMVMPGSVRRDPDSLKVNFSLYDAEGSVTVSYEGILPDLFREGQGVVVQGTLEKGNHVLAHEVLAKHDENYTPPEVEKAMQENHRRPQRADKDTSS</sequence>
<protein>
    <recommendedName>
        <fullName evidence="1">Cytochrome c-type biogenesis protein CcmE</fullName>
    </recommendedName>
    <alternativeName>
        <fullName evidence="1">Cytochrome c maturation protein E</fullName>
    </alternativeName>
    <alternativeName>
        <fullName evidence="1">Heme chaperone CcmE</fullName>
    </alternativeName>
</protein>
<dbReference type="EMBL" id="CP000026">
    <property type="protein sequence ID" value="AAV76615.1"/>
    <property type="molecule type" value="Genomic_DNA"/>
</dbReference>
<dbReference type="EMBL" id="CP000026">
    <property type="protein sequence ID" value="AAV79458.1"/>
    <property type="molecule type" value="Genomic_DNA"/>
</dbReference>
<dbReference type="SMR" id="Q5PMV3"/>
<dbReference type="KEGG" id="spt:SPA0614"/>
<dbReference type="KEGG" id="spt:SPA3665"/>
<dbReference type="HOGENOM" id="CLU_079503_1_0_6"/>
<dbReference type="Proteomes" id="UP000008185">
    <property type="component" value="Chromosome"/>
</dbReference>
<dbReference type="GO" id="GO:0005886">
    <property type="term" value="C:plasma membrane"/>
    <property type="evidence" value="ECO:0007669"/>
    <property type="project" value="UniProtKB-SubCell"/>
</dbReference>
<dbReference type="GO" id="GO:0020037">
    <property type="term" value="F:heme binding"/>
    <property type="evidence" value="ECO:0007669"/>
    <property type="project" value="InterPro"/>
</dbReference>
<dbReference type="GO" id="GO:0046872">
    <property type="term" value="F:metal ion binding"/>
    <property type="evidence" value="ECO:0007669"/>
    <property type="project" value="UniProtKB-KW"/>
</dbReference>
<dbReference type="GO" id="GO:0017004">
    <property type="term" value="P:cytochrome complex assembly"/>
    <property type="evidence" value="ECO:0007669"/>
    <property type="project" value="UniProtKB-KW"/>
</dbReference>
<dbReference type="FunFam" id="2.40.50.140:FF:000104">
    <property type="entry name" value="Cytochrome c-type biogenesis protein CcmE"/>
    <property type="match status" value="1"/>
</dbReference>
<dbReference type="Gene3D" id="2.40.50.140">
    <property type="entry name" value="Nucleic acid-binding proteins"/>
    <property type="match status" value="1"/>
</dbReference>
<dbReference type="HAMAP" id="MF_01959">
    <property type="entry name" value="CcmE"/>
    <property type="match status" value="1"/>
</dbReference>
<dbReference type="InterPro" id="IPR004329">
    <property type="entry name" value="CcmE"/>
</dbReference>
<dbReference type="InterPro" id="IPR036127">
    <property type="entry name" value="CcmE-like_sf"/>
</dbReference>
<dbReference type="InterPro" id="IPR012340">
    <property type="entry name" value="NA-bd_OB-fold"/>
</dbReference>
<dbReference type="NCBIfam" id="NF009635">
    <property type="entry name" value="PRK13150.1"/>
    <property type="match status" value="1"/>
</dbReference>
<dbReference type="NCBIfam" id="NF009638">
    <property type="entry name" value="PRK13165.1"/>
    <property type="match status" value="1"/>
</dbReference>
<dbReference type="NCBIfam" id="NF009727">
    <property type="entry name" value="PRK13254.1-1"/>
    <property type="match status" value="1"/>
</dbReference>
<dbReference type="NCBIfam" id="NF009729">
    <property type="entry name" value="PRK13254.1-3"/>
    <property type="match status" value="1"/>
</dbReference>
<dbReference type="PANTHER" id="PTHR34128">
    <property type="entry name" value="CYTOCHROME C-TYPE BIOGENESIS PROTEIN CCME HOMOLOG, MITOCHONDRIAL"/>
    <property type="match status" value="1"/>
</dbReference>
<dbReference type="PANTHER" id="PTHR34128:SF2">
    <property type="entry name" value="CYTOCHROME C-TYPE BIOGENESIS PROTEIN CCME HOMOLOG, MITOCHONDRIAL"/>
    <property type="match status" value="1"/>
</dbReference>
<dbReference type="Pfam" id="PF03100">
    <property type="entry name" value="CcmE"/>
    <property type="match status" value="1"/>
</dbReference>
<dbReference type="SUPFAM" id="SSF82093">
    <property type="entry name" value="Heme chaperone CcmE"/>
    <property type="match status" value="1"/>
</dbReference>